<reference key="1">
    <citation type="journal article" date="2002" name="Nature">
        <title>The genome sequence of Schizosaccharomyces pombe.</title>
        <authorList>
            <person name="Wood V."/>
            <person name="Gwilliam R."/>
            <person name="Rajandream M.A."/>
            <person name="Lyne M.H."/>
            <person name="Lyne R."/>
            <person name="Stewart A."/>
            <person name="Sgouros J.G."/>
            <person name="Peat N."/>
            <person name="Hayles J."/>
            <person name="Baker S.G."/>
            <person name="Basham D."/>
            <person name="Bowman S."/>
            <person name="Brooks K."/>
            <person name="Brown D."/>
            <person name="Brown S."/>
            <person name="Chillingworth T."/>
            <person name="Churcher C.M."/>
            <person name="Collins M."/>
            <person name="Connor R."/>
            <person name="Cronin A."/>
            <person name="Davis P."/>
            <person name="Feltwell T."/>
            <person name="Fraser A."/>
            <person name="Gentles S."/>
            <person name="Goble A."/>
            <person name="Hamlin N."/>
            <person name="Harris D.E."/>
            <person name="Hidalgo J."/>
            <person name="Hodgson G."/>
            <person name="Holroyd S."/>
            <person name="Hornsby T."/>
            <person name="Howarth S."/>
            <person name="Huckle E.J."/>
            <person name="Hunt S."/>
            <person name="Jagels K."/>
            <person name="James K.D."/>
            <person name="Jones L."/>
            <person name="Jones M."/>
            <person name="Leather S."/>
            <person name="McDonald S."/>
            <person name="McLean J."/>
            <person name="Mooney P."/>
            <person name="Moule S."/>
            <person name="Mungall K.L."/>
            <person name="Murphy L.D."/>
            <person name="Niblett D."/>
            <person name="Odell C."/>
            <person name="Oliver K."/>
            <person name="O'Neil S."/>
            <person name="Pearson D."/>
            <person name="Quail M.A."/>
            <person name="Rabbinowitsch E."/>
            <person name="Rutherford K.M."/>
            <person name="Rutter S."/>
            <person name="Saunders D."/>
            <person name="Seeger K."/>
            <person name="Sharp S."/>
            <person name="Skelton J."/>
            <person name="Simmonds M.N."/>
            <person name="Squares R."/>
            <person name="Squares S."/>
            <person name="Stevens K."/>
            <person name="Taylor K."/>
            <person name="Taylor R.G."/>
            <person name="Tivey A."/>
            <person name="Walsh S.V."/>
            <person name="Warren T."/>
            <person name="Whitehead S."/>
            <person name="Woodward J.R."/>
            <person name="Volckaert G."/>
            <person name="Aert R."/>
            <person name="Robben J."/>
            <person name="Grymonprez B."/>
            <person name="Weltjens I."/>
            <person name="Vanstreels E."/>
            <person name="Rieger M."/>
            <person name="Schaefer M."/>
            <person name="Mueller-Auer S."/>
            <person name="Gabel C."/>
            <person name="Fuchs M."/>
            <person name="Duesterhoeft A."/>
            <person name="Fritzc C."/>
            <person name="Holzer E."/>
            <person name="Moestl D."/>
            <person name="Hilbert H."/>
            <person name="Borzym K."/>
            <person name="Langer I."/>
            <person name="Beck A."/>
            <person name="Lehrach H."/>
            <person name="Reinhardt R."/>
            <person name="Pohl T.M."/>
            <person name="Eger P."/>
            <person name="Zimmermann W."/>
            <person name="Wedler H."/>
            <person name="Wambutt R."/>
            <person name="Purnelle B."/>
            <person name="Goffeau A."/>
            <person name="Cadieu E."/>
            <person name="Dreano S."/>
            <person name="Gloux S."/>
            <person name="Lelaure V."/>
            <person name="Mottier S."/>
            <person name="Galibert F."/>
            <person name="Aves S.J."/>
            <person name="Xiang Z."/>
            <person name="Hunt C."/>
            <person name="Moore K."/>
            <person name="Hurst S.M."/>
            <person name="Lucas M."/>
            <person name="Rochet M."/>
            <person name="Gaillardin C."/>
            <person name="Tallada V.A."/>
            <person name="Garzon A."/>
            <person name="Thode G."/>
            <person name="Daga R.R."/>
            <person name="Cruzado L."/>
            <person name="Jimenez J."/>
            <person name="Sanchez M."/>
            <person name="del Rey F."/>
            <person name="Benito J."/>
            <person name="Dominguez A."/>
            <person name="Revuelta J.L."/>
            <person name="Moreno S."/>
            <person name="Armstrong J."/>
            <person name="Forsburg S.L."/>
            <person name="Cerutti L."/>
            <person name="Lowe T."/>
            <person name="McCombie W.R."/>
            <person name="Paulsen I."/>
            <person name="Potashkin J."/>
            <person name="Shpakovski G.V."/>
            <person name="Ussery D."/>
            <person name="Barrell B.G."/>
            <person name="Nurse P."/>
        </authorList>
    </citation>
    <scope>NUCLEOTIDE SEQUENCE [LARGE SCALE GENOMIC DNA]</scope>
    <source>
        <strain>972 / ATCC 24843</strain>
    </source>
</reference>
<reference key="2">
    <citation type="journal article" date="2006" name="Nat. Biotechnol.">
        <title>ORFeome cloning and global analysis of protein localization in the fission yeast Schizosaccharomyces pombe.</title>
        <authorList>
            <person name="Matsuyama A."/>
            <person name="Arai R."/>
            <person name="Yashiroda Y."/>
            <person name="Shirai A."/>
            <person name="Kamata A."/>
            <person name="Sekido S."/>
            <person name="Kobayashi Y."/>
            <person name="Hashimoto A."/>
            <person name="Hamamoto M."/>
            <person name="Hiraoka Y."/>
            <person name="Horinouchi S."/>
            <person name="Yoshida M."/>
        </authorList>
    </citation>
    <scope>SUBCELLULAR LOCATION [LARGE SCALE ANALYSIS]</scope>
</reference>
<gene>
    <name type="ORF">SPBC215.10</name>
</gene>
<comment type="subcellular location">
    <subcellularLocation>
        <location evidence="1">Cytoplasm</location>
    </subcellularLocation>
    <subcellularLocation>
        <location evidence="1">Nucleus</location>
    </subcellularLocation>
</comment>
<comment type="similarity">
    <text evidence="2">Belongs to the HAD-like hydrolase superfamily.</text>
</comment>
<evidence type="ECO:0000269" key="1">
    <source>
    </source>
</evidence>
<evidence type="ECO:0000305" key="2"/>
<name>YH5A_SCHPO</name>
<sequence>MPSKEIDINQKKNVLPKPEDIQLIICDVDGTLLGPDHKPHPRNLRALKYLRENYPQLPFVLATGRQRTSVGNIREALGLHVFPCVHLNGCVVYDKGEIVACAALKNSLAIDIIDKLKDIQTCALFGYDEDYVYQIKQESDKKQHGIKFLRLCGETVKDDANEMLPQLKGPKDIFNKMVVFDDDTNGLEEAKKRLAGIPSDEVALTQALPQTFEIIPPNDNKGVALKNILSKIYPSISLENVLAFGDGANDVCMFELAGYSVAIRSGMPVALKAAKAISDVSSAEGAVGEVLERIYNIPPDFN</sequence>
<feature type="chain" id="PRO_0000343147" description="Uncharacterized hydrolase C215.10">
    <location>
        <begin position="1"/>
        <end position="302"/>
    </location>
</feature>
<organism>
    <name type="scientific">Schizosaccharomyces pombe (strain 972 / ATCC 24843)</name>
    <name type="common">Fission yeast</name>
    <dbReference type="NCBI Taxonomy" id="284812"/>
    <lineage>
        <taxon>Eukaryota</taxon>
        <taxon>Fungi</taxon>
        <taxon>Dikarya</taxon>
        <taxon>Ascomycota</taxon>
        <taxon>Taphrinomycotina</taxon>
        <taxon>Schizosaccharomycetes</taxon>
        <taxon>Schizosaccharomycetales</taxon>
        <taxon>Schizosaccharomycetaceae</taxon>
        <taxon>Schizosaccharomyces</taxon>
    </lineage>
</organism>
<dbReference type="EC" id="3.-.-.-"/>
<dbReference type="EMBL" id="CU329671">
    <property type="protein sequence ID" value="CAA22124.1"/>
    <property type="molecule type" value="Genomic_DNA"/>
</dbReference>
<dbReference type="PIR" id="T39900">
    <property type="entry name" value="T39900"/>
</dbReference>
<dbReference type="SMR" id="O94314"/>
<dbReference type="BioGRID" id="277196">
    <property type="interactions" value="3"/>
</dbReference>
<dbReference type="FunCoup" id="O94314">
    <property type="interactions" value="415"/>
</dbReference>
<dbReference type="STRING" id="284812.O94314"/>
<dbReference type="PaxDb" id="4896-SPBC215.10.1"/>
<dbReference type="EnsemblFungi" id="SPBC215.10.1">
    <property type="protein sequence ID" value="SPBC215.10.1:pep"/>
    <property type="gene ID" value="SPBC215.10"/>
</dbReference>
<dbReference type="KEGG" id="spo:2540671"/>
<dbReference type="PomBase" id="SPBC215.10"/>
<dbReference type="VEuPathDB" id="FungiDB:SPBC215.10"/>
<dbReference type="eggNOG" id="ENOG502QUN8">
    <property type="taxonomic scope" value="Eukaryota"/>
</dbReference>
<dbReference type="HOGENOM" id="CLU_044146_3_1_1"/>
<dbReference type="InParanoid" id="O94314"/>
<dbReference type="OMA" id="PYIFEVM"/>
<dbReference type="PhylomeDB" id="O94314"/>
<dbReference type="PRO" id="PR:O94314"/>
<dbReference type="Proteomes" id="UP000002485">
    <property type="component" value="Chromosome II"/>
</dbReference>
<dbReference type="GO" id="GO:0005829">
    <property type="term" value="C:cytosol"/>
    <property type="evidence" value="ECO:0007005"/>
    <property type="project" value="PomBase"/>
</dbReference>
<dbReference type="GO" id="GO:0005634">
    <property type="term" value="C:nucleus"/>
    <property type="evidence" value="ECO:0007005"/>
    <property type="project" value="PomBase"/>
</dbReference>
<dbReference type="GO" id="GO:0000287">
    <property type="term" value="F:magnesium ion binding"/>
    <property type="evidence" value="ECO:0000318"/>
    <property type="project" value="GO_Central"/>
</dbReference>
<dbReference type="GO" id="GO:0016791">
    <property type="term" value="F:phosphatase activity"/>
    <property type="evidence" value="ECO:0000318"/>
    <property type="project" value="GO_Central"/>
</dbReference>
<dbReference type="Gene3D" id="3.30.1240.10">
    <property type="match status" value="1"/>
</dbReference>
<dbReference type="Gene3D" id="3.40.50.1000">
    <property type="entry name" value="HAD superfamily/HAD-like"/>
    <property type="match status" value="1"/>
</dbReference>
<dbReference type="InterPro" id="IPR000150">
    <property type="entry name" value="Cof"/>
</dbReference>
<dbReference type="InterPro" id="IPR036412">
    <property type="entry name" value="HAD-like_sf"/>
</dbReference>
<dbReference type="InterPro" id="IPR006379">
    <property type="entry name" value="HAD-SF_hydro_IIB"/>
</dbReference>
<dbReference type="InterPro" id="IPR023214">
    <property type="entry name" value="HAD_sf"/>
</dbReference>
<dbReference type="NCBIfam" id="TIGR00099">
    <property type="entry name" value="Cof-subfamily"/>
    <property type="match status" value="1"/>
</dbReference>
<dbReference type="NCBIfam" id="TIGR01484">
    <property type="entry name" value="HAD-SF-IIB"/>
    <property type="match status" value="1"/>
</dbReference>
<dbReference type="PANTHER" id="PTHR10000:SF8">
    <property type="entry name" value="HAD SUPERFAMILY HYDROLASE-LIKE, TYPE 3"/>
    <property type="match status" value="1"/>
</dbReference>
<dbReference type="PANTHER" id="PTHR10000">
    <property type="entry name" value="PHOSPHOSERINE PHOSPHATASE"/>
    <property type="match status" value="1"/>
</dbReference>
<dbReference type="Pfam" id="PF08282">
    <property type="entry name" value="Hydrolase_3"/>
    <property type="match status" value="1"/>
</dbReference>
<dbReference type="SUPFAM" id="SSF56784">
    <property type="entry name" value="HAD-like"/>
    <property type="match status" value="1"/>
</dbReference>
<accession>O94314</accession>
<keyword id="KW-0963">Cytoplasm</keyword>
<keyword id="KW-0378">Hydrolase</keyword>
<keyword id="KW-0539">Nucleus</keyword>
<keyword id="KW-1185">Reference proteome</keyword>
<protein>
    <recommendedName>
        <fullName>Uncharacterized hydrolase C215.10</fullName>
        <ecNumber>3.-.-.-</ecNumber>
    </recommendedName>
</protein>
<proteinExistence type="inferred from homology"/>